<evidence type="ECO:0000250" key="1"/>
<evidence type="ECO:0000305" key="2"/>
<organism>
    <name type="scientific">Schistocerca nitens</name>
    <name type="common">Vagrant locust</name>
    <name type="synonym">Gray bird grasshopper</name>
    <dbReference type="NCBI Taxonomy" id="7011"/>
    <lineage>
        <taxon>Eukaryota</taxon>
        <taxon>Metazoa</taxon>
        <taxon>Ecdysozoa</taxon>
        <taxon>Arthropoda</taxon>
        <taxon>Hexapoda</taxon>
        <taxon>Insecta</taxon>
        <taxon>Pterygota</taxon>
        <taxon>Neoptera</taxon>
        <taxon>Polyneoptera</taxon>
        <taxon>Orthoptera</taxon>
        <taxon>Caelifera</taxon>
        <taxon>Acrididea</taxon>
        <taxon>Acridomorpha</taxon>
        <taxon>Acridoidea</taxon>
        <taxon>Acrididae</taxon>
        <taxon>Cyrtacanthacridinae</taxon>
        <taxon>Schistocerca</taxon>
    </lineage>
</organism>
<accession>P18830</accession>
<accession>P01271</accession>
<proteinExistence type="inferred from homology"/>
<protein>
    <recommendedName>
        <fullName>Adipokinetic prohormone type 1</fullName>
    </recommendedName>
    <component>
        <recommendedName>
            <fullName>Adipokinetic hormone 1</fullName>
        </recommendedName>
        <alternativeName>
            <fullName>Adipokinetic hormone I</fullName>
            <shortName>AKH-I</shortName>
        </alternativeName>
    </component>
    <component>
        <recommendedName>
            <fullName>Adipokinetic hormone precursor-related peptide alpha chain</fullName>
            <shortName>APRP-alpha</shortName>
        </recommendedName>
    </component>
</protein>
<sequence length="63" mass="6840">MVQRCLVVALLVVVVAAALCSAQLNFTPNWGTGKRDAGDYGDPYSFLYRLIQAEARKMSGCSN</sequence>
<name>AKH1_SCHNI</name>
<feature type="signal peptide" evidence="1">
    <location>
        <begin position="1"/>
        <end position="22"/>
    </location>
</feature>
<feature type="chain" id="PRO_0000000923" description="Adipokinetic prohormone type 1">
    <location>
        <begin position="23"/>
        <end position="63"/>
    </location>
</feature>
<feature type="peptide" id="PRO_0000000924" description="Adipokinetic hormone 1">
    <location>
        <begin position="23"/>
        <end position="32"/>
    </location>
</feature>
<feature type="peptide" id="PRO_0000000925" description="Adipokinetic hormone precursor-related peptide alpha chain">
    <location>
        <begin position="36"/>
        <end position="63"/>
    </location>
</feature>
<feature type="modified residue" description="Pyrrolidone carboxylic acid" evidence="1">
    <location>
        <position position="23"/>
    </location>
</feature>
<feature type="modified residue" description="Threonine amide" evidence="1">
    <location>
        <position position="32"/>
    </location>
</feature>
<feature type="disulfide bond" description="Interchain" evidence="1">
    <location>
        <position position="61"/>
    </location>
</feature>
<comment type="function">
    <text>This hormone, released from cells in the corpora cardiaca, causes release of diglycerides from the fat body and stimulation of muscles to use these diglycerides as an energy source during energy-demanding processes.</text>
</comment>
<comment type="subunit">
    <text>Adipokinetic hormone precursor-related peptide (APRP) can form three type of disulfide-bond dimers: p1 (alpha-alpha), p2 (alpha-beta), and p3 (beta-beta).</text>
</comment>
<comment type="subcellular location">
    <subcellularLocation>
        <location>Secreted</location>
    </subcellularLocation>
</comment>
<comment type="similarity">
    <text evidence="2">Belongs to the AKH/HRTH/RPCH family.</text>
</comment>
<reference key="1">
    <citation type="journal article" date="1990" name="J. Biol. Chem.">
        <title>The structurally similar neuropeptides adipokinetic hormone I and II are derived from similar, very small mRNAs.</title>
        <authorList>
            <person name="Noyes B.E."/>
            <person name="Schaffer M.H."/>
        </authorList>
    </citation>
    <scope>NUCLEOTIDE SEQUENCE [MRNA]</scope>
</reference>
<keyword id="KW-0027">Amidation</keyword>
<keyword id="KW-0165">Cleavage on pair of basic residues</keyword>
<keyword id="KW-1015">Disulfide bond</keyword>
<keyword id="KW-0286">Flight</keyword>
<keyword id="KW-0372">Hormone</keyword>
<keyword id="KW-0527">Neuropeptide</keyword>
<keyword id="KW-0873">Pyrrolidone carboxylic acid</keyword>
<keyword id="KW-0964">Secreted</keyword>
<keyword id="KW-0732">Signal</keyword>
<dbReference type="EMBL" id="L08772">
    <property type="protein sequence ID" value="AAC18873.1"/>
    <property type="molecule type" value="Genomic_DNA"/>
</dbReference>
<dbReference type="EMBL" id="L08771">
    <property type="protein sequence ID" value="AAC18873.1"/>
    <property type="status" value="JOINED"/>
    <property type="molecule type" value="Genomic_DNA"/>
</dbReference>
<dbReference type="EMBL" id="J05170">
    <property type="protein sequence ID" value="AAA73931.1"/>
    <property type="molecule type" value="mRNA"/>
</dbReference>
<dbReference type="PIR" id="A34913">
    <property type="entry name" value="A34913"/>
</dbReference>
<dbReference type="GO" id="GO:0005576">
    <property type="term" value="C:extracellular region"/>
    <property type="evidence" value="ECO:0007669"/>
    <property type="project" value="UniProtKB-SubCell"/>
</dbReference>
<dbReference type="GO" id="GO:0005179">
    <property type="term" value="F:hormone activity"/>
    <property type="evidence" value="ECO:0007669"/>
    <property type="project" value="UniProtKB-KW"/>
</dbReference>
<dbReference type="GO" id="GO:0007629">
    <property type="term" value="P:flight behavior"/>
    <property type="evidence" value="ECO:0007669"/>
    <property type="project" value="UniProtKB-KW"/>
</dbReference>
<dbReference type="GO" id="GO:0007218">
    <property type="term" value="P:neuropeptide signaling pathway"/>
    <property type="evidence" value="ECO:0007669"/>
    <property type="project" value="UniProtKB-KW"/>
</dbReference>
<dbReference type="InterPro" id="IPR002047">
    <property type="entry name" value="Adipokinetic_hormone_CS"/>
</dbReference>
<dbReference type="InterPro" id="IPR010475">
    <property type="entry name" value="AKH/RPCH_hormone"/>
</dbReference>
<dbReference type="Pfam" id="PF06377">
    <property type="entry name" value="Adipokin_hormo"/>
    <property type="match status" value="1"/>
</dbReference>
<dbReference type="PROSITE" id="PS00256">
    <property type="entry name" value="AKH"/>
    <property type="match status" value="1"/>
</dbReference>